<protein>
    <recommendedName>
        <fullName evidence="1">Large ribosomal subunit protein bL21</fullName>
    </recommendedName>
    <alternativeName>
        <fullName evidence="2">50S ribosomal protein L21</fullName>
    </alternativeName>
</protein>
<evidence type="ECO:0000255" key="1">
    <source>
        <dbReference type="HAMAP-Rule" id="MF_01363"/>
    </source>
</evidence>
<evidence type="ECO:0000305" key="2"/>
<gene>
    <name evidence="1" type="primary">rplU</name>
    <name type="ordered locus">Rxyl_1525</name>
</gene>
<comment type="function">
    <text evidence="1">This protein binds to 23S rRNA in the presence of protein L20.</text>
</comment>
<comment type="subunit">
    <text evidence="1">Part of the 50S ribosomal subunit. Contacts protein L20.</text>
</comment>
<comment type="similarity">
    <text evidence="1">Belongs to the bacterial ribosomal protein bL21 family.</text>
</comment>
<organism>
    <name type="scientific">Rubrobacter xylanophilus (strain DSM 9941 / JCM 11954 / NBRC 16129 / PRD-1)</name>
    <dbReference type="NCBI Taxonomy" id="266117"/>
    <lineage>
        <taxon>Bacteria</taxon>
        <taxon>Bacillati</taxon>
        <taxon>Actinomycetota</taxon>
        <taxon>Rubrobacteria</taxon>
        <taxon>Rubrobacterales</taxon>
        <taxon>Rubrobacteraceae</taxon>
        <taxon>Rubrobacter</taxon>
    </lineage>
</organism>
<dbReference type="EMBL" id="CP000386">
    <property type="protein sequence ID" value="ABG04487.1"/>
    <property type="molecule type" value="Genomic_DNA"/>
</dbReference>
<dbReference type="RefSeq" id="WP_011564504.1">
    <property type="nucleotide sequence ID" value="NC_008148.1"/>
</dbReference>
<dbReference type="SMR" id="Q1AVU1"/>
<dbReference type="STRING" id="266117.Rxyl_1525"/>
<dbReference type="KEGG" id="rxy:Rxyl_1525"/>
<dbReference type="eggNOG" id="COG0261">
    <property type="taxonomic scope" value="Bacteria"/>
</dbReference>
<dbReference type="HOGENOM" id="CLU_061463_3_2_11"/>
<dbReference type="OrthoDB" id="9813334at2"/>
<dbReference type="PhylomeDB" id="Q1AVU1"/>
<dbReference type="Proteomes" id="UP000006637">
    <property type="component" value="Chromosome"/>
</dbReference>
<dbReference type="GO" id="GO:0005737">
    <property type="term" value="C:cytoplasm"/>
    <property type="evidence" value="ECO:0007669"/>
    <property type="project" value="UniProtKB-ARBA"/>
</dbReference>
<dbReference type="GO" id="GO:1990904">
    <property type="term" value="C:ribonucleoprotein complex"/>
    <property type="evidence" value="ECO:0007669"/>
    <property type="project" value="UniProtKB-KW"/>
</dbReference>
<dbReference type="GO" id="GO:0005840">
    <property type="term" value="C:ribosome"/>
    <property type="evidence" value="ECO:0007669"/>
    <property type="project" value="UniProtKB-KW"/>
</dbReference>
<dbReference type="GO" id="GO:0019843">
    <property type="term" value="F:rRNA binding"/>
    <property type="evidence" value="ECO:0007669"/>
    <property type="project" value="UniProtKB-UniRule"/>
</dbReference>
<dbReference type="GO" id="GO:0003735">
    <property type="term" value="F:structural constituent of ribosome"/>
    <property type="evidence" value="ECO:0007669"/>
    <property type="project" value="InterPro"/>
</dbReference>
<dbReference type="GO" id="GO:0006412">
    <property type="term" value="P:translation"/>
    <property type="evidence" value="ECO:0007669"/>
    <property type="project" value="UniProtKB-UniRule"/>
</dbReference>
<dbReference type="HAMAP" id="MF_01363">
    <property type="entry name" value="Ribosomal_bL21"/>
    <property type="match status" value="1"/>
</dbReference>
<dbReference type="InterPro" id="IPR028909">
    <property type="entry name" value="bL21-like"/>
</dbReference>
<dbReference type="InterPro" id="IPR036164">
    <property type="entry name" value="bL21-like_sf"/>
</dbReference>
<dbReference type="InterPro" id="IPR001787">
    <property type="entry name" value="Ribosomal_bL21"/>
</dbReference>
<dbReference type="InterPro" id="IPR018258">
    <property type="entry name" value="Ribosomal_bL21_CS"/>
</dbReference>
<dbReference type="NCBIfam" id="TIGR00061">
    <property type="entry name" value="L21"/>
    <property type="match status" value="1"/>
</dbReference>
<dbReference type="PANTHER" id="PTHR21349">
    <property type="entry name" value="50S RIBOSOMAL PROTEIN L21"/>
    <property type="match status" value="1"/>
</dbReference>
<dbReference type="PANTHER" id="PTHR21349:SF0">
    <property type="entry name" value="LARGE RIBOSOMAL SUBUNIT PROTEIN BL21M"/>
    <property type="match status" value="1"/>
</dbReference>
<dbReference type="Pfam" id="PF00829">
    <property type="entry name" value="Ribosomal_L21p"/>
    <property type="match status" value="1"/>
</dbReference>
<dbReference type="SUPFAM" id="SSF141091">
    <property type="entry name" value="L21p-like"/>
    <property type="match status" value="1"/>
</dbReference>
<dbReference type="PROSITE" id="PS01169">
    <property type="entry name" value="RIBOSOMAL_L21"/>
    <property type="match status" value="1"/>
</dbReference>
<proteinExistence type="inferred from homology"/>
<accession>Q1AVU1</accession>
<keyword id="KW-1185">Reference proteome</keyword>
<keyword id="KW-0687">Ribonucleoprotein</keyword>
<keyword id="KW-0689">Ribosomal protein</keyword>
<keyword id="KW-0694">RNA-binding</keyword>
<keyword id="KW-0699">rRNA-binding</keyword>
<feature type="chain" id="PRO_0000269370" description="Large ribosomal subunit protein bL21">
    <location>
        <begin position="1"/>
        <end position="95"/>
    </location>
</feature>
<sequence length="95" mass="10970">MYAVVKSGGKQYRVRQGDELLVERLAGEVGDRVELPVSLRAEEGVLDLEPRTARAEILEHLRGEKLKVYKYKPKKGYRRKKGHRQALTRIRVVEV</sequence>
<reference key="1">
    <citation type="submission" date="2006-06" db="EMBL/GenBank/DDBJ databases">
        <title>Complete sequence of Rubrobacter xylanophilus DSM 9941.</title>
        <authorList>
            <consortium name="US DOE Joint Genome Institute"/>
            <person name="Copeland A."/>
            <person name="Lucas S."/>
            <person name="Lapidus A."/>
            <person name="Barry K."/>
            <person name="Detter J.C."/>
            <person name="Glavina del Rio T."/>
            <person name="Hammon N."/>
            <person name="Israni S."/>
            <person name="Dalin E."/>
            <person name="Tice H."/>
            <person name="Pitluck S."/>
            <person name="Munk A.C."/>
            <person name="Brettin T."/>
            <person name="Bruce D."/>
            <person name="Han C."/>
            <person name="Tapia R."/>
            <person name="Gilna P."/>
            <person name="Schmutz J."/>
            <person name="Larimer F."/>
            <person name="Land M."/>
            <person name="Hauser L."/>
            <person name="Kyrpides N."/>
            <person name="Lykidis A."/>
            <person name="da Costa M.S."/>
            <person name="Rainey F.A."/>
            <person name="Empadinhas N."/>
            <person name="Jolivet E."/>
            <person name="Battista J.R."/>
            <person name="Richardson P."/>
        </authorList>
    </citation>
    <scope>NUCLEOTIDE SEQUENCE [LARGE SCALE GENOMIC DNA]</scope>
    <source>
        <strain>DSM 9941 / JCM 11954 / NBRC 16129 / PRD-1</strain>
    </source>
</reference>
<name>RL21_RUBXD</name>